<accession>A9JRI0</accession>
<name>HEAT6_DANRE</name>
<feature type="chain" id="PRO_0000337177" description="HEAT repeat-containing protein 6">
    <location>
        <begin position="1"/>
        <end position="1201"/>
    </location>
</feature>
<feature type="repeat" description="HEAT 1">
    <location>
        <begin position="182"/>
        <end position="221"/>
    </location>
</feature>
<feature type="repeat" description="HEAT 2">
    <location>
        <begin position="460"/>
        <end position="498"/>
    </location>
</feature>
<feature type="repeat" description="HEAT 3">
    <location>
        <begin position="523"/>
        <end position="560"/>
    </location>
</feature>
<feature type="repeat" description="HEAT 4">
    <location>
        <begin position="566"/>
        <end position="603"/>
    </location>
</feature>
<feature type="region of interest" description="Disordered" evidence="1">
    <location>
        <begin position="1"/>
        <end position="25"/>
    </location>
</feature>
<feature type="region of interest" description="Disordered" evidence="1">
    <location>
        <begin position="321"/>
        <end position="390"/>
    </location>
</feature>
<feature type="region of interest" description="Disordered" evidence="1">
    <location>
        <begin position="618"/>
        <end position="653"/>
    </location>
</feature>
<feature type="compositionally biased region" description="Basic residues" evidence="1">
    <location>
        <begin position="341"/>
        <end position="352"/>
    </location>
</feature>
<feature type="compositionally biased region" description="Polar residues" evidence="1">
    <location>
        <begin position="375"/>
        <end position="390"/>
    </location>
</feature>
<feature type="compositionally biased region" description="Polar residues" evidence="1">
    <location>
        <begin position="618"/>
        <end position="633"/>
    </location>
</feature>
<organism>
    <name type="scientific">Danio rerio</name>
    <name type="common">Zebrafish</name>
    <name type="synonym">Brachydanio rerio</name>
    <dbReference type="NCBI Taxonomy" id="7955"/>
    <lineage>
        <taxon>Eukaryota</taxon>
        <taxon>Metazoa</taxon>
        <taxon>Chordata</taxon>
        <taxon>Craniata</taxon>
        <taxon>Vertebrata</taxon>
        <taxon>Euteleostomi</taxon>
        <taxon>Actinopterygii</taxon>
        <taxon>Neopterygii</taxon>
        <taxon>Teleostei</taxon>
        <taxon>Ostariophysi</taxon>
        <taxon>Cypriniformes</taxon>
        <taxon>Danionidae</taxon>
        <taxon>Danioninae</taxon>
        <taxon>Danio</taxon>
    </lineage>
</organism>
<keyword id="KW-1185">Reference proteome</keyword>
<keyword id="KW-0677">Repeat</keyword>
<proteinExistence type="evidence at transcript level"/>
<evidence type="ECO:0000256" key="1">
    <source>
        <dbReference type="SAM" id="MobiDB-lite"/>
    </source>
</evidence>
<gene>
    <name type="primary">heatr6</name>
    <name type="ORF">zgc:172359</name>
</gene>
<dbReference type="EMBL" id="BC155667">
    <property type="protein sequence ID" value="AAI55668.1"/>
    <property type="molecule type" value="mRNA"/>
</dbReference>
<dbReference type="RefSeq" id="NP_001107785.1">
    <property type="nucleotide sequence ID" value="NM_001114313.1"/>
</dbReference>
<dbReference type="FunCoup" id="A9JRI0">
    <property type="interactions" value="1680"/>
</dbReference>
<dbReference type="STRING" id="7955.ENSDARP00000097730"/>
<dbReference type="PaxDb" id="7955-ENSDARP00000097730"/>
<dbReference type="PeptideAtlas" id="A9JRI0"/>
<dbReference type="GeneID" id="567838"/>
<dbReference type="KEGG" id="dre:567838"/>
<dbReference type="AGR" id="ZFIN:ZDB-GENE-080204-118"/>
<dbReference type="CTD" id="63897"/>
<dbReference type="ZFIN" id="ZDB-GENE-080204-118">
    <property type="gene designation" value="heatr6"/>
</dbReference>
<dbReference type="eggNOG" id="KOG4535">
    <property type="taxonomic scope" value="Eukaryota"/>
</dbReference>
<dbReference type="InParanoid" id="A9JRI0"/>
<dbReference type="OrthoDB" id="66533at2759"/>
<dbReference type="PhylomeDB" id="A9JRI0"/>
<dbReference type="PRO" id="PR:A9JRI0"/>
<dbReference type="Proteomes" id="UP000000437">
    <property type="component" value="Chromosome 21"/>
</dbReference>
<dbReference type="Gene3D" id="1.25.10.10">
    <property type="entry name" value="Leucine-rich Repeat Variant"/>
    <property type="match status" value="3"/>
</dbReference>
<dbReference type="InterPro" id="IPR011989">
    <property type="entry name" value="ARM-like"/>
</dbReference>
<dbReference type="InterPro" id="IPR016024">
    <property type="entry name" value="ARM-type_fold"/>
</dbReference>
<dbReference type="InterPro" id="IPR025283">
    <property type="entry name" value="DUF4042"/>
</dbReference>
<dbReference type="InterPro" id="IPR052107">
    <property type="entry name" value="HEAT6"/>
</dbReference>
<dbReference type="PANTHER" id="PTHR13366:SF0">
    <property type="entry name" value="HEAT REPEAT-CONTAINING PROTEIN 6"/>
    <property type="match status" value="1"/>
</dbReference>
<dbReference type="PANTHER" id="PTHR13366">
    <property type="entry name" value="MALARIA ANTIGEN-RELATED"/>
    <property type="match status" value="1"/>
</dbReference>
<dbReference type="Pfam" id="PF13251">
    <property type="entry name" value="DUF4042"/>
    <property type="match status" value="1"/>
</dbReference>
<dbReference type="Pfam" id="PF13513">
    <property type="entry name" value="HEAT_EZ"/>
    <property type="match status" value="1"/>
</dbReference>
<dbReference type="SUPFAM" id="SSF48371">
    <property type="entry name" value="ARM repeat"/>
    <property type="match status" value="2"/>
</dbReference>
<protein>
    <recommendedName>
        <fullName>HEAT repeat-containing protein 6</fullName>
    </recommendedName>
</protein>
<sequence length="1201" mass="130503">MAGKVTFLGSNSSFSPDGKTQGFKSASADTSRFVSLSKPQHELDGSAQAQISRCFNKLRSLSPSDSASLKTELNLLFDELISENYSSSNHDNIPPEVVCEILVQASRLVPLSQEHLIIKLCQMIHQLLNQLQIIVDEHTLDVLVSYCSRALRTCSSWTHSEVLLALSSLVYGNGSKCQRYLPDLLGPSGVLVKYGDPKQPDIELRRSAVHCIANLCLSVPSQPYLEEPYKSVCYGILLRTLQSTKPPDVDDIVFCTLLQSALKGMQYFLNGGKWKAVPNQDLGALLAVLKRFMFYGLPGISVEMPQVLYPAPLPQYETIPAVKPEPAQDTPAQKKTAASQQKKRKSRGKGKKGAGEGKQDGEADDVSAAGGGDQSGWSHGSQSSMLTSPSVATPQLYPSWKKCSSDSEFSDPEGGMQSKLRLYQARVRQSSLQCFLAVVKCVEKRILYGYWSSFVPDAPGIGGPPPLTLLTIALKDPLPKVRAGSLQVLSALLEGSRQFLSTAEDTGAPRQAFTPFSATLAASIRELHRGLLLALIAESSCQTLTQVLKCLAHLVSNVPYNRLRPGLLSPLWKQIRPYVRHRDVNVRVSSLTLFGALVSTQAPLPEVQLLLQQPGSASSLGSGISTPQESPLSWRQPARRDEEASSPAAAEGPEGPCWLLQLCVSLVTQPREEPYSDSDAGGSNGAPLEPSPVRLEALQVLAHLVKGYFSLAQASLLELGQLSARCLTEQDPSVQLHGAKLLEELGTGIIQQYRADANTPQSAKRVPVNQVVQFWSEVLGGPLISALQNEHHPTLQTSACDTLSSILPQAFSQLPDKTQVLCITILLGLTYSENSLVKAAAVRALGVYILFPCLREDVMFVADTANAILTALDDRSPNVRAKAAWSLGNLTDTLIVNMQSVGLEFQEDFSDMLLLNMLRSATKASADKDRVKSNAVRALGNLLHFLQPGHLGKPVFEQPLLEAMRALIDTVRGDATMKVRWNACYALGNAFRNQHLPLGSAVWSTEAFSALSCVVTSCKNFKVRIKSAAALSVPATRECYGDSQQFSEVWRSLAQALEHSEETEDFLEYRYCASLRSQLCRALLHLLSLCQPDDLPALGSSVSGQSRPALQALLISHLRDEGLVPSAGADGEEALDHSTPEDGWTLLTDTLTRLKGLLGEPVMDSNEDLESVLSFLQDVVRNFEEMKEAESKESSLVLGKS</sequence>
<reference key="1">
    <citation type="submission" date="2007-12" db="EMBL/GenBank/DDBJ databases">
        <authorList>
            <consortium name="NIH - Zebrafish Gene Collection (ZGC) project"/>
        </authorList>
    </citation>
    <scope>NUCLEOTIDE SEQUENCE [LARGE SCALE MRNA]</scope>
</reference>